<dbReference type="EC" id="3.1.1.61" evidence="1"/>
<dbReference type="EC" id="3.5.1.44" evidence="1"/>
<dbReference type="EMBL" id="AE008923">
    <property type="protein sequence ID" value="AAM37715.1"/>
    <property type="molecule type" value="Genomic_DNA"/>
</dbReference>
<dbReference type="SMR" id="Q8PIM5"/>
<dbReference type="KEGG" id="xac:XAC2870"/>
<dbReference type="eggNOG" id="COG2201">
    <property type="taxonomic scope" value="Bacteria"/>
</dbReference>
<dbReference type="HOGENOM" id="CLU_000445_51_0_6"/>
<dbReference type="Proteomes" id="UP000000576">
    <property type="component" value="Chromosome"/>
</dbReference>
<dbReference type="GO" id="GO:0005737">
    <property type="term" value="C:cytoplasm"/>
    <property type="evidence" value="ECO:0007669"/>
    <property type="project" value="UniProtKB-SubCell"/>
</dbReference>
<dbReference type="GO" id="GO:0000156">
    <property type="term" value="F:phosphorelay response regulator activity"/>
    <property type="evidence" value="ECO:0007669"/>
    <property type="project" value="InterPro"/>
</dbReference>
<dbReference type="GO" id="GO:0008984">
    <property type="term" value="F:protein-glutamate methylesterase activity"/>
    <property type="evidence" value="ECO:0007669"/>
    <property type="project" value="UniProtKB-UniRule"/>
</dbReference>
<dbReference type="GO" id="GO:0050568">
    <property type="term" value="F:protein-glutamine glutaminase activity"/>
    <property type="evidence" value="ECO:0007669"/>
    <property type="project" value="UniProtKB-UniRule"/>
</dbReference>
<dbReference type="GO" id="GO:0006935">
    <property type="term" value="P:chemotaxis"/>
    <property type="evidence" value="ECO:0007669"/>
    <property type="project" value="UniProtKB-UniRule"/>
</dbReference>
<dbReference type="CDD" id="cd16432">
    <property type="entry name" value="CheB_Rec"/>
    <property type="match status" value="1"/>
</dbReference>
<dbReference type="CDD" id="cd17541">
    <property type="entry name" value="REC_CheB-like"/>
    <property type="match status" value="1"/>
</dbReference>
<dbReference type="Gene3D" id="3.40.50.2300">
    <property type="match status" value="1"/>
</dbReference>
<dbReference type="Gene3D" id="3.40.50.180">
    <property type="entry name" value="Methylesterase CheB, C-terminal domain"/>
    <property type="match status" value="1"/>
</dbReference>
<dbReference type="HAMAP" id="MF_00099">
    <property type="entry name" value="CheB_chemtxs"/>
    <property type="match status" value="1"/>
</dbReference>
<dbReference type="InterPro" id="IPR008248">
    <property type="entry name" value="CheB-like"/>
</dbReference>
<dbReference type="InterPro" id="IPR035909">
    <property type="entry name" value="CheB_C"/>
</dbReference>
<dbReference type="InterPro" id="IPR011006">
    <property type="entry name" value="CheY-like_superfamily"/>
</dbReference>
<dbReference type="InterPro" id="IPR000673">
    <property type="entry name" value="Sig_transdc_resp-reg_Me-estase"/>
</dbReference>
<dbReference type="InterPro" id="IPR001789">
    <property type="entry name" value="Sig_transdc_resp-reg_receiver"/>
</dbReference>
<dbReference type="NCBIfam" id="NF001965">
    <property type="entry name" value="PRK00742.1"/>
    <property type="match status" value="1"/>
</dbReference>
<dbReference type="NCBIfam" id="NF009206">
    <property type="entry name" value="PRK12555.1"/>
    <property type="match status" value="1"/>
</dbReference>
<dbReference type="PANTHER" id="PTHR42872">
    <property type="entry name" value="PROTEIN-GLUTAMATE METHYLESTERASE/PROTEIN-GLUTAMINE GLUTAMINASE"/>
    <property type="match status" value="1"/>
</dbReference>
<dbReference type="PANTHER" id="PTHR42872:SF6">
    <property type="entry name" value="PROTEIN-GLUTAMATE METHYLESTERASE_PROTEIN-GLUTAMINE GLUTAMINASE"/>
    <property type="match status" value="1"/>
</dbReference>
<dbReference type="Pfam" id="PF01339">
    <property type="entry name" value="CheB_methylest"/>
    <property type="match status" value="1"/>
</dbReference>
<dbReference type="Pfam" id="PF00072">
    <property type="entry name" value="Response_reg"/>
    <property type="match status" value="1"/>
</dbReference>
<dbReference type="PIRSF" id="PIRSF000876">
    <property type="entry name" value="RR_chemtxs_CheB"/>
    <property type="match status" value="1"/>
</dbReference>
<dbReference type="SMART" id="SM00448">
    <property type="entry name" value="REC"/>
    <property type="match status" value="1"/>
</dbReference>
<dbReference type="SUPFAM" id="SSF52172">
    <property type="entry name" value="CheY-like"/>
    <property type="match status" value="1"/>
</dbReference>
<dbReference type="SUPFAM" id="SSF52738">
    <property type="entry name" value="Methylesterase CheB, C-terminal domain"/>
    <property type="match status" value="1"/>
</dbReference>
<dbReference type="PROSITE" id="PS50122">
    <property type="entry name" value="CHEB"/>
    <property type="match status" value="1"/>
</dbReference>
<dbReference type="PROSITE" id="PS50110">
    <property type="entry name" value="RESPONSE_REGULATORY"/>
    <property type="match status" value="1"/>
</dbReference>
<keyword id="KW-0145">Chemotaxis</keyword>
<keyword id="KW-0963">Cytoplasm</keyword>
<keyword id="KW-0378">Hydrolase</keyword>
<keyword id="KW-0597">Phosphoprotein</keyword>
<organism>
    <name type="scientific">Xanthomonas axonopodis pv. citri (strain 306)</name>
    <dbReference type="NCBI Taxonomy" id="190486"/>
    <lineage>
        <taxon>Bacteria</taxon>
        <taxon>Pseudomonadati</taxon>
        <taxon>Pseudomonadota</taxon>
        <taxon>Gammaproteobacteria</taxon>
        <taxon>Lysobacterales</taxon>
        <taxon>Lysobacteraceae</taxon>
        <taxon>Xanthomonas</taxon>
    </lineage>
</organism>
<name>CHEB2_XANAC</name>
<accession>Q8PIM5</accession>
<gene>
    <name evidence="1" type="primary">cheB2</name>
    <name type="ordered locus">XAC2870</name>
</gene>
<sequence>MVVDDSAVVRQVLVGVLNDAPGIDVIATAADPLLAIEKMRQHWPDVIVLDVEMPRMDGITFLRKIMSERPTPVVICSTLTEKGARVTMDALAAGAVAVVTKPRLGLKQFLTDSADELVATVRSAARANVKRLAARVTAAPLEAEVKHTADVILPAQSGRALAQTTERIVAIGTSTGGTQALEEVLTALPRVCPGIVIVQHMPEKFTAAFAARLNGLCQIAVKEAANNDRVMPGRALIAPGGKHLLLRRSGAQYFVEVLEGPPVNRHRPSVDVLFRSAARAAGSNALGIIMTGMGDDGAAGLLEMRQAGARTVAQDEHTSIVFGMPKEAIKRGGADRILPLGAMAREIVTQLQ</sequence>
<proteinExistence type="inferred from homology"/>
<protein>
    <recommendedName>
        <fullName evidence="1">Protein-glutamate methylesterase/protein-glutamine glutaminase 2</fullName>
        <ecNumber evidence="1">3.1.1.61</ecNumber>
        <ecNumber evidence="1">3.5.1.44</ecNumber>
    </recommendedName>
</protein>
<comment type="function">
    <text evidence="1">Involved in chemotaxis. Part of a chemotaxis signal transduction system that modulates chemotaxis in response to various stimuli. Catalyzes the demethylation of specific methylglutamate residues introduced into the chemoreceptors (methyl-accepting chemotaxis proteins or MCP) by CheR. Also mediates the irreversible deamidation of specific glutamine residues to glutamic acid.</text>
</comment>
<comment type="catalytic activity">
    <reaction evidence="1">
        <text>[protein]-L-glutamate 5-O-methyl ester + H2O = L-glutamyl-[protein] + methanol + H(+)</text>
        <dbReference type="Rhea" id="RHEA:23236"/>
        <dbReference type="Rhea" id="RHEA-COMP:10208"/>
        <dbReference type="Rhea" id="RHEA-COMP:10311"/>
        <dbReference type="ChEBI" id="CHEBI:15377"/>
        <dbReference type="ChEBI" id="CHEBI:15378"/>
        <dbReference type="ChEBI" id="CHEBI:17790"/>
        <dbReference type="ChEBI" id="CHEBI:29973"/>
        <dbReference type="ChEBI" id="CHEBI:82795"/>
        <dbReference type="EC" id="3.1.1.61"/>
    </reaction>
</comment>
<comment type="catalytic activity">
    <reaction evidence="1">
        <text>L-glutaminyl-[protein] + H2O = L-glutamyl-[protein] + NH4(+)</text>
        <dbReference type="Rhea" id="RHEA:16441"/>
        <dbReference type="Rhea" id="RHEA-COMP:10207"/>
        <dbReference type="Rhea" id="RHEA-COMP:10208"/>
        <dbReference type="ChEBI" id="CHEBI:15377"/>
        <dbReference type="ChEBI" id="CHEBI:28938"/>
        <dbReference type="ChEBI" id="CHEBI:29973"/>
        <dbReference type="ChEBI" id="CHEBI:30011"/>
        <dbReference type="EC" id="3.5.1.44"/>
    </reaction>
</comment>
<comment type="subcellular location">
    <subcellularLocation>
        <location evidence="1">Cytoplasm</location>
    </subcellularLocation>
</comment>
<comment type="domain">
    <text evidence="1">Contains a C-terminal catalytic domain, and an N-terminal region which modulates catalytic activity.</text>
</comment>
<comment type="PTM">
    <text evidence="1">Phosphorylated by CheA. Phosphorylation of the N-terminal regulatory domain activates the methylesterase activity.</text>
</comment>
<comment type="similarity">
    <text evidence="1">Belongs to the CheB family.</text>
</comment>
<feature type="chain" id="PRO_0000158044" description="Protein-glutamate methylesterase/protein-glutamine glutaminase 2">
    <location>
        <begin position="1"/>
        <end position="352"/>
    </location>
</feature>
<feature type="domain" description="Response regulatory" evidence="1">
    <location>
        <begin position="1"/>
        <end position="116"/>
    </location>
</feature>
<feature type="domain" description="CheB-type methylesterase" evidence="1">
    <location>
        <begin position="162"/>
        <end position="352"/>
    </location>
</feature>
<feature type="active site" evidence="1">
    <location>
        <position position="174"/>
    </location>
</feature>
<feature type="active site" evidence="1">
    <location>
        <position position="200"/>
    </location>
</feature>
<feature type="active site" evidence="1">
    <location>
        <position position="296"/>
    </location>
</feature>
<feature type="modified residue" description="4-aspartylphosphate" evidence="1">
    <location>
        <position position="50"/>
    </location>
</feature>
<reference key="1">
    <citation type="journal article" date="2002" name="Nature">
        <title>Comparison of the genomes of two Xanthomonas pathogens with differing host specificities.</title>
        <authorList>
            <person name="da Silva A.C.R."/>
            <person name="Ferro J.A."/>
            <person name="Reinach F.C."/>
            <person name="Farah C.S."/>
            <person name="Furlan L.R."/>
            <person name="Quaggio R.B."/>
            <person name="Monteiro-Vitorello C.B."/>
            <person name="Van Sluys M.A."/>
            <person name="Almeida N.F. Jr."/>
            <person name="Alves L.M.C."/>
            <person name="do Amaral A.M."/>
            <person name="Bertolini M.C."/>
            <person name="Camargo L.E.A."/>
            <person name="Camarotte G."/>
            <person name="Cannavan F."/>
            <person name="Cardozo J."/>
            <person name="Chambergo F."/>
            <person name="Ciapina L.P."/>
            <person name="Cicarelli R.M.B."/>
            <person name="Coutinho L.L."/>
            <person name="Cursino-Santos J.R."/>
            <person name="El-Dorry H."/>
            <person name="Faria J.B."/>
            <person name="Ferreira A.J.S."/>
            <person name="Ferreira R.C.C."/>
            <person name="Ferro M.I.T."/>
            <person name="Formighieri E.F."/>
            <person name="Franco M.C."/>
            <person name="Greggio C.C."/>
            <person name="Gruber A."/>
            <person name="Katsuyama A.M."/>
            <person name="Kishi L.T."/>
            <person name="Leite R.P."/>
            <person name="Lemos E.G.M."/>
            <person name="Lemos M.V.F."/>
            <person name="Locali E.C."/>
            <person name="Machado M.A."/>
            <person name="Madeira A.M.B.N."/>
            <person name="Martinez-Rossi N.M."/>
            <person name="Martins E.C."/>
            <person name="Meidanis J."/>
            <person name="Menck C.F.M."/>
            <person name="Miyaki C.Y."/>
            <person name="Moon D.H."/>
            <person name="Moreira L.M."/>
            <person name="Novo M.T.M."/>
            <person name="Okura V.K."/>
            <person name="Oliveira M.C."/>
            <person name="Oliveira V.R."/>
            <person name="Pereira H.A."/>
            <person name="Rossi A."/>
            <person name="Sena J.A.D."/>
            <person name="Silva C."/>
            <person name="de Souza R.F."/>
            <person name="Spinola L.A.F."/>
            <person name="Takita M.A."/>
            <person name="Tamura R.E."/>
            <person name="Teixeira E.C."/>
            <person name="Tezza R.I.D."/>
            <person name="Trindade dos Santos M."/>
            <person name="Truffi D."/>
            <person name="Tsai S.M."/>
            <person name="White F.F."/>
            <person name="Setubal J.C."/>
            <person name="Kitajima J.P."/>
        </authorList>
    </citation>
    <scope>NUCLEOTIDE SEQUENCE [LARGE SCALE GENOMIC DNA]</scope>
    <source>
        <strain>306</strain>
    </source>
</reference>
<evidence type="ECO:0000255" key="1">
    <source>
        <dbReference type="HAMAP-Rule" id="MF_00099"/>
    </source>
</evidence>